<name>KAD4_HUMAN</name>
<comment type="function">
    <text evidence="4 5 6 7 8 9 10">Broad-specificity mitochondrial nucleoside phosphate kinase involved in cellular nucleotide homeostasis by catalyzing nucleoside-phosphate interconversions (PubMed:19073142, PubMed:19766732, PubMed:23416111, PubMed:24767988). Similar to other adenylate kinases, preferentially catalyzes the phosphorylation of the nucleoside monophosphate AMP with ATP as phosphate donor to produce ADP (PubMed:19766732). Phosphorylates only AMP when using GTP as phosphate donor (PubMed:19766732). In vitro, can also catalyze the phosphorylation of CMP, dAMP and dCMP and use GTP as an alternate phosphate donor (PubMed:19766732, PubMed:23416111). Moreover, exhibits a diphosphate kinase activity, producing ATP, CTP, GTP, UTP, TTP, dATP, dCTP and dGTP from the corresponding diphosphate substrates with either ATP or GTP as phosphate donors (PubMed:23416111). Plays a role in controlling cellular ATP levels by regulating phosphorylation and activation of the energy sensor protein kinase AMPK (PubMed:24767988, PubMed:26980435). Plays a protective role in the cellular response to oxidative stress (PubMed:19130895, PubMed:23474458, PubMed:26980435).</text>
</comment>
<comment type="catalytic activity">
    <reaction evidence="6">
        <text>a ribonucleoside 5'-phosphate + ATP = a ribonucleoside 5'-diphosphate + ADP</text>
        <dbReference type="Rhea" id="RHEA:24036"/>
        <dbReference type="ChEBI" id="CHEBI:30616"/>
        <dbReference type="ChEBI" id="CHEBI:57930"/>
        <dbReference type="ChEBI" id="CHEBI:58043"/>
        <dbReference type="ChEBI" id="CHEBI:456216"/>
        <dbReference type="EC" id="2.7.4.4"/>
    </reaction>
</comment>
<comment type="catalytic activity">
    <reaction evidence="6">
        <text>AMP + ATP = 2 ADP</text>
        <dbReference type="Rhea" id="RHEA:12973"/>
        <dbReference type="ChEBI" id="CHEBI:30616"/>
        <dbReference type="ChEBI" id="CHEBI:456215"/>
        <dbReference type="ChEBI" id="CHEBI:456216"/>
    </reaction>
</comment>
<comment type="catalytic activity">
    <reaction evidence="6">
        <text>GTP + AMP = GDP + ADP</text>
        <dbReference type="Rhea" id="RHEA:29863"/>
        <dbReference type="ChEBI" id="CHEBI:37565"/>
        <dbReference type="ChEBI" id="CHEBI:58189"/>
        <dbReference type="ChEBI" id="CHEBI:456215"/>
        <dbReference type="ChEBI" id="CHEBI:456216"/>
    </reaction>
</comment>
<comment type="catalytic activity">
    <reaction evidence="6">
        <text>CMP + ATP = CDP + ADP</text>
        <dbReference type="Rhea" id="RHEA:11600"/>
        <dbReference type="ChEBI" id="CHEBI:30616"/>
        <dbReference type="ChEBI" id="CHEBI:58069"/>
        <dbReference type="ChEBI" id="CHEBI:60377"/>
        <dbReference type="ChEBI" id="CHEBI:456216"/>
    </reaction>
</comment>
<comment type="catalytic activity">
    <reaction evidence="6">
        <text>GTP + CMP = CDP + GDP</text>
        <dbReference type="Rhea" id="RHEA:79855"/>
        <dbReference type="ChEBI" id="CHEBI:37565"/>
        <dbReference type="ChEBI" id="CHEBI:58069"/>
        <dbReference type="ChEBI" id="CHEBI:58189"/>
        <dbReference type="ChEBI" id="CHEBI:60377"/>
    </reaction>
</comment>
<comment type="catalytic activity">
    <reaction evidence="6">
        <text>dAMP + ATP = dADP + ADP</text>
        <dbReference type="Rhea" id="RHEA:23100"/>
        <dbReference type="ChEBI" id="CHEBI:30616"/>
        <dbReference type="ChEBI" id="CHEBI:57667"/>
        <dbReference type="ChEBI" id="CHEBI:58245"/>
        <dbReference type="ChEBI" id="CHEBI:456216"/>
    </reaction>
</comment>
<comment type="catalytic activity">
    <reaction evidence="6">
        <text>dCMP + ATP = dCDP + ADP</text>
        <dbReference type="Rhea" id="RHEA:25094"/>
        <dbReference type="ChEBI" id="CHEBI:30616"/>
        <dbReference type="ChEBI" id="CHEBI:57566"/>
        <dbReference type="ChEBI" id="CHEBI:58593"/>
        <dbReference type="ChEBI" id="CHEBI:456216"/>
    </reaction>
</comment>
<comment type="catalytic activity">
    <reaction evidence="7">
        <text>a 2'-deoxyribonucleoside 5'-diphosphate + ATP = a 2'-deoxyribonucleoside 5'-triphosphate + ADP</text>
        <dbReference type="Rhea" id="RHEA:44640"/>
        <dbReference type="ChEBI" id="CHEBI:30616"/>
        <dbReference type="ChEBI" id="CHEBI:61560"/>
        <dbReference type="ChEBI" id="CHEBI:73316"/>
        <dbReference type="ChEBI" id="CHEBI:456216"/>
        <dbReference type="EC" id="2.7.4.6"/>
    </reaction>
</comment>
<comment type="catalytic activity">
    <reaction evidence="7">
        <text>a ribonucleoside 5'-diphosphate + ATP = a ribonucleoside 5'-triphosphate + ADP</text>
        <dbReference type="Rhea" id="RHEA:18113"/>
        <dbReference type="ChEBI" id="CHEBI:30616"/>
        <dbReference type="ChEBI" id="CHEBI:57930"/>
        <dbReference type="ChEBI" id="CHEBI:61557"/>
        <dbReference type="ChEBI" id="CHEBI:456216"/>
        <dbReference type="EC" id="2.7.4.6"/>
    </reaction>
</comment>
<comment type="catalytic activity">
    <reaction evidence="7">
        <text>GDP + ATP = GTP + ADP</text>
        <dbReference type="Rhea" id="RHEA:27686"/>
        <dbReference type="ChEBI" id="CHEBI:30616"/>
        <dbReference type="ChEBI" id="CHEBI:37565"/>
        <dbReference type="ChEBI" id="CHEBI:58189"/>
        <dbReference type="ChEBI" id="CHEBI:456216"/>
        <dbReference type="EC" id="2.7.4.6"/>
    </reaction>
</comment>
<comment type="catalytic activity">
    <reaction evidence="7">
        <text>CDP + GTP = CTP + GDP</text>
        <dbReference type="Rhea" id="RHEA:79859"/>
        <dbReference type="ChEBI" id="CHEBI:37563"/>
        <dbReference type="ChEBI" id="CHEBI:37565"/>
        <dbReference type="ChEBI" id="CHEBI:58069"/>
        <dbReference type="ChEBI" id="CHEBI:58189"/>
    </reaction>
</comment>
<comment type="catalytic activity">
    <reaction evidence="7">
        <text>CDP + ATP = CTP + ADP</text>
        <dbReference type="Rhea" id="RHEA:25237"/>
        <dbReference type="ChEBI" id="CHEBI:30616"/>
        <dbReference type="ChEBI" id="CHEBI:37563"/>
        <dbReference type="ChEBI" id="CHEBI:58069"/>
        <dbReference type="ChEBI" id="CHEBI:456216"/>
        <dbReference type="EC" id="2.7.4.6"/>
    </reaction>
</comment>
<comment type="catalytic activity">
    <reaction evidence="7">
        <text>UDP + ATP = UTP + ADP</text>
        <dbReference type="Rhea" id="RHEA:25098"/>
        <dbReference type="ChEBI" id="CHEBI:30616"/>
        <dbReference type="ChEBI" id="CHEBI:46398"/>
        <dbReference type="ChEBI" id="CHEBI:58223"/>
        <dbReference type="ChEBI" id="CHEBI:456216"/>
        <dbReference type="EC" id="2.7.4.6"/>
    </reaction>
</comment>
<comment type="catalytic activity">
    <reaction evidence="7">
        <text>GTP + UDP = UTP + GDP</text>
        <dbReference type="Rhea" id="RHEA:79863"/>
        <dbReference type="ChEBI" id="CHEBI:37565"/>
        <dbReference type="ChEBI" id="CHEBI:46398"/>
        <dbReference type="ChEBI" id="CHEBI:58189"/>
        <dbReference type="ChEBI" id="CHEBI:58223"/>
    </reaction>
</comment>
<comment type="catalytic activity">
    <reaction evidence="7">
        <text>dADP + GTP = dATP + GDP</text>
        <dbReference type="Rhea" id="RHEA:79871"/>
        <dbReference type="ChEBI" id="CHEBI:37565"/>
        <dbReference type="ChEBI" id="CHEBI:57667"/>
        <dbReference type="ChEBI" id="CHEBI:58189"/>
        <dbReference type="ChEBI" id="CHEBI:61404"/>
    </reaction>
</comment>
<comment type="catalytic activity">
    <reaction evidence="7">
        <text>dCDP + GTP = dCTP + GDP</text>
        <dbReference type="Rhea" id="RHEA:79875"/>
        <dbReference type="ChEBI" id="CHEBI:37565"/>
        <dbReference type="ChEBI" id="CHEBI:58189"/>
        <dbReference type="ChEBI" id="CHEBI:58593"/>
        <dbReference type="ChEBI" id="CHEBI:61481"/>
    </reaction>
</comment>
<comment type="catalytic activity">
    <reaction evidence="7">
        <text>dCDP + ATP = dCTP + ADP</text>
        <dbReference type="Rhea" id="RHEA:27678"/>
        <dbReference type="ChEBI" id="CHEBI:30616"/>
        <dbReference type="ChEBI" id="CHEBI:58593"/>
        <dbReference type="ChEBI" id="CHEBI:61481"/>
        <dbReference type="ChEBI" id="CHEBI:456216"/>
        <dbReference type="EC" id="2.7.4.6"/>
    </reaction>
</comment>
<comment type="catalytic activity">
    <reaction evidence="7">
        <text>dGDP + ATP = dGTP + ADP</text>
        <dbReference type="Rhea" id="RHEA:27690"/>
        <dbReference type="ChEBI" id="CHEBI:30616"/>
        <dbReference type="ChEBI" id="CHEBI:58595"/>
        <dbReference type="ChEBI" id="CHEBI:61429"/>
        <dbReference type="ChEBI" id="CHEBI:456216"/>
        <dbReference type="EC" id="2.7.4.6"/>
    </reaction>
</comment>
<comment type="catalytic activity">
    <reaction evidence="7">
        <text>dTDP + GTP = dTTP + GDP</text>
        <dbReference type="Rhea" id="RHEA:79867"/>
        <dbReference type="ChEBI" id="CHEBI:37565"/>
        <dbReference type="ChEBI" id="CHEBI:37568"/>
        <dbReference type="ChEBI" id="CHEBI:58189"/>
        <dbReference type="ChEBI" id="CHEBI:58369"/>
    </reaction>
</comment>
<comment type="catalytic activity">
    <reaction evidence="7">
        <text>dTDP + ATP = dTTP + ADP</text>
        <dbReference type="Rhea" id="RHEA:27682"/>
        <dbReference type="ChEBI" id="CHEBI:30616"/>
        <dbReference type="ChEBI" id="CHEBI:37568"/>
        <dbReference type="ChEBI" id="CHEBI:58369"/>
        <dbReference type="ChEBI" id="CHEBI:456216"/>
        <dbReference type="EC" id="2.7.4.6"/>
    </reaction>
</comment>
<comment type="biophysicochemical properties">
    <kinetics>
        <KM evidence="6">5.3 uM for AMP with ATP as phosphate donor</KM>
        <KM evidence="6">1.4 uM for AMP with GTP as phosphate donor</KM>
        <KM evidence="6">507 uM for dAMP with ATP as phosphate donor</KM>
        <Vmax evidence="6">90.0 pmol/min/ug enzyme with AMP as substrate and ATP as phosphate donor</Vmax>
        <Vmax evidence="6">80.0 pmol/min/ug enzyme with AMP as substrate and GTP as phosphate donor</Vmax>
        <Vmax evidence="6">88.0 pmol/min/ug enzyme with dAMP as substrate and ATP as phosphate donor</Vmax>
    </kinetics>
</comment>
<comment type="subunit">
    <text evidence="5 11">Monomer (Ref.17). Interacts with SLC25A5/ANT2 (PubMed:19130895).</text>
</comment>
<comment type="subcellular location">
    <subcellularLocation>
        <location evidence="2 3 6 10">Mitochondrion matrix</location>
    </subcellularLocation>
</comment>
<comment type="tissue specificity">
    <text evidence="3">Highly expressed in kidney, moderately expressed in heart and liver and weakly expressed in brain.</text>
</comment>
<comment type="induction">
    <text evidence="5 8 10">By hypoxia (at protein level).</text>
</comment>
<comment type="domain">
    <text evidence="2 13">Consists of three domains, a large central CORE domain and two small peripheral domains, NMPbind and LID, which undergo movements during catalysis. The LID domain closes over the site of phosphoryl transfer upon GTP/ATP binding. Assembling and dissambling the active center during each catalytic cycle provides an effective means to prevent GTP/ATP hydrolysis.</text>
</comment>
<comment type="similarity">
    <text evidence="2">Belongs to the adenylate kinase family. AK3 subfamily.</text>
</comment>
<comment type="caution">
    <text evidence="3 5 6 7">Some studies have failed to detect adenylate kinase activity (PubMed:11485571, PubMed:19130895). However, kinase activity has been demonstrated in a number of other studies (PubMed:19766732, PubMed:23416111).</text>
</comment>
<evidence type="ECO:0000250" key="1">
    <source>
        <dbReference type="UniProtKB" id="Q9WUR9"/>
    </source>
</evidence>
<evidence type="ECO:0000255" key="2">
    <source>
        <dbReference type="HAMAP-Rule" id="MF_03170"/>
    </source>
</evidence>
<evidence type="ECO:0000269" key="3">
    <source>
    </source>
</evidence>
<evidence type="ECO:0000269" key="4">
    <source>
    </source>
</evidence>
<evidence type="ECO:0000269" key="5">
    <source>
    </source>
</evidence>
<evidence type="ECO:0000269" key="6">
    <source>
    </source>
</evidence>
<evidence type="ECO:0000269" key="7">
    <source>
    </source>
</evidence>
<evidence type="ECO:0000269" key="8">
    <source>
    </source>
</evidence>
<evidence type="ECO:0000269" key="9">
    <source>
    </source>
</evidence>
<evidence type="ECO:0000269" key="10">
    <source>
    </source>
</evidence>
<evidence type="ECO:0000269" key="11">
    <source ref="17"/>
</evidence>
<evidence type="ECO:0000305" key="12"/>
<evidence type="ECO:0000305" key="13">
    <source>
    </source>
</evidence>
<evidence type="ECO:0000305" key="14">
    <source>
    </source>
</evidence>
<evidence type="ECO:0000312" key="15">
    <source>
        <dbReference type="HGNC" id="HGNC:363"/>
    </source>
</evidence>
<evidence type="ECO:0007829" key="16">
    <source>
        <dbReference type="PDB" id="2AR7"/>
    </source>
</evidence>
<evidence type="ECO:0007829" key="17">
    <source>
        <dbReference type="PDB" id="2BBW"/>
    </source>
</evidence>
<evidence type="ECO:0007829" key="18">
    <source>
        <dbReference type="PDB" id="3NDP"/>
    </source>
</evidence>
<proteinExistence type="evidence at protein level"/>
<keyword id="KW-0002">3D-structure</keyword>
<keyword id="KW-0007">Acetylation</keyword>
<keyword id="KW-0067">ATP-binding</keyword>
<keyword id="KW-0342">GTP-binding</keyword>
<keyword id="KW-0418">Kinase</keyword>
<keyword id="KW-0496">Mitochondrion</keyword>
<keyword id="KW-0547">Nucleotide-binding</keyword>
<keyword id="KW-1267">Proteomics identification</keyword>
<keyword id="KW-1185">Reference proteome</keyword>
<keyword id="KW-0808">Transferase</keyword>
<gene>
    <name evidence="15" type="primary">AK4</name>
    <name evidence="15" type="synonym">AK3</name>
    <name evidence="15" type="synonym">AK3L1</name>
</gene>
<accession>P27144</accession>
<accession>B2R927</accession>
<accession>D3DQ62</accession>
<accession>Q6IBH4</accession>
<accession>Q6NXQ5</accession>
<accession>Q8IUU9</accession>
<feature type="chain" id="PRO_0000158926" description="Adenylate kinase 4, mitochondrial">
    <location>
        <begin position="1"/>
        <end position="223"/>
    </location>
</feature>
<feature type="region of interest" description="NMP" evidence="2 4">
    <location>
        <begin position="35"/>
        <end position="64"/>
    </location>
</feature>
<feature type="region of interest" description="LID" evidence="2 4">
    <location>
        <begin position="125"/>
        <end position="162"/>
    </location>
</feature>
<feature type="binding site" evidence="2 11">
    <location>
        <begin position="15"/>
        <end position="20"/>
    </location>
    <ligand>
        <name>a ribonucleoside 5'-triphosphate</name>
        <dbReference type="ChEBI" id="CHEBI:61557"/>
    </ligand>
</feature>
<feature type="binding site" evidence="2 11">
    <location>
        <position position="36"/>
    </location>
    <ligand>
        <name>AMP</name>
        <dbReference type="ChEBI" id="CHEBI:456215"/>
    </ligand>
</feature>
<feature type="binding site" evidence="2">
    <location>
        <position position="41"/>
    </location>
    <ligand>
        <name>AMP</name>
        <dbReference type="ChEBI" id="CHEBI:456215"/>
    </ligand>
</feature>
<feature type="binding site" evidence="2 11">
    <location>
        <begin position="62"/>
        <end position="64"/>
    </location>
    <ligand>
        <name>AMP</name>
        <dbReference type="ChEBI" id="CHEBI:456215"/>
    </ligand>
</feature>
<feature type="binding site" evidence="2 11">
    <location>
        <begin position="89"/>
        <end position="92"/>
    </location>
    <ligand>
        <name>AMP</name>
        <dbReference type="ChEBI" id="CHEBI:456215"/>
    </ligand>
</feature>
<feature type="binding site" evidence="2">
    <location>
        <position position="96"/>
    </location>
    <ligand>
        <name>AMP</name>
        <dbReference type="ChEBI" id="CHEBI:456215"/>
    </ligand>
</feature>
<feature type="binding site" evidence="2 11">
    <location>
        <position position="126"/>
    </location>
    <ligand>
        <name>a ribonucleoside 5'-triphosphate</name>
        <dbReference type="ChEBI" id="CHEBI:61557"/>
    </ligand>
</feature>
<feature type="binding site" evidence="2">
    <location>
        <begin position="135"/>
        <end position="136"/>
    </location>
    <ligand>
        <name>a ribonucleoside 5'-triphosphate</name>
        <dbReference type="ChEBI" id="CHEBI:61557"/>
    </ligand>
</feature>
<feature type="binding site" evidence="2 11">
    <location>
        <position position="170"/>
    </location>
    <ligand>
        <name>AMP</name>
        <dbReference type="ChEBI" id="CHEBI:456215"/>
    </ligand>
</feature>
<feature type="binding site" evidence="2 11">
    <location>
        <position position="199"/>
    </location>
    <ligand>
        <name>a ribonucleoside 5'-triphosphate</name>
        <dbReference type="ChEBI" id="CHEBI:61557"/>
    </ligand>
</feature>
<feature type="modified residue" description="N6-succinyllysine" evidence="1">
    <location>
        <position position="60"/>
    </location>
</feature>
<feature type="modified residue" description="N6-acetyllysine" evidence="1">
    <location>
        <position position="175"/>
    </location>
</feature>
<feature type="modified residue" description="N6-acetyllysine; alternate" evidence="1">
    <location>
        <position position="179"/>
    </location>
</feature>
<feature type="modified residue" description="N6-succinyllysine; alternate" evidence="1">
    <location>
        <position position="179"/>
    </location>
</feature>
<feature type="modified residue" description="N6-acetyllysine; alternate" evidence="1">
    <location>
        <position position="186"/>
    </location>
</feature>
<feature type="modified residue" description="N6-succinyllysine; alternate" evidence="1">
    <location>
        <position position="186"/>
    </location>
</feature>
<feature type="mutagenesis site" description="Abolishes mitochondrial import; when associated with G-7." evidence="6">
    <original>K</original>
    <variation>G</variation>
    <location>
        <position position="4"/>
    </location>
</feature>
<feature type="mutagenesis site" description="Abolishes mitochondrial import; when associated with G-4." evidence="6">
    <original>R</original>
    <variation>G</variation>
    <location>
        <position position="7"/>
    </location>
</feature>
<feature type="sequence conflict" description="In Ref. 6; AAH40224/AAI46654." evidence="12" ref="6">
    <original>C</original>
    <variation>S</variation>
    <location>
        <position position="22"/>
    </location>
</feature>
<feature type="sequence conflict" description="In Ref. 6; AAH66944." evidence="12" ref="6">
    <original>Q</original>
    <variation>R</variation>
    <location>
        <position position="23"/>
    </location>
</feature>
<feature type="strand" evidence="17">
    <location>
        <begin position="7"/>
        <end position="11"/>
    </location>
</feature>
<feature type="helix" evidence="17">
    <location>
        <begin position="18"/>
        <end position="29"/>
    </location>
</feature>
<feature type="strand" evidence="16">
    <location>
        <begin position="32"/>
        <end position="34"/>
    </location>
</feature>
<feature type="helix" evidence="17">
    <location>
        <begin position="36"/>
        <end position="45"/>
    </location>
</feature>
<feature type="helix" evidence="17">
    <location>
        <begin position="49"/>
        <end position="59"/>
    </location>
</feature>
<feature type="helix" evidence="17">
    <location>
        <begin position="66"/>
        <end position="78"/>
    </location>
</feature>
<feature type="turn" evidence="16">
    <location>
        <begin position="79"/>
        <end position="82"/>
    </location>
</feature>
<feature type="strand" evidence="17">
    <location>
        <begin position="85"/>
        <end position="89"/>
    </location>
</feature>
<feature type="helix" evidence="17">
    <location>
        <begin position="94"/>
        <end position="101"/>
    </location>
</feature>
<feature type="strand" evidence="17">
    <location>
        <begin position="108"/>
        <end position="113"/>
    </location>
</feature>
<feature type="helix" evidence="17">
    <location>
        <begin position="116"/>
        <end position="124"/>
    </location>
</feature>
<feature type="strand" evidence="17">
    <location>
        <begin position="126"/>
        <end position="129"/>
    </location>
</feature>
<feature type="turn" evidence="17">
    <location>
        <begin position="130"/>
        <end position="133"/>
    </location>
</feature>
<feature type="strand" evidence="17">
    <location>
        <begin position="134"/>
        <end position="137"/>
    </location>
</feature>
<feature type="turn" evidence="17">
    <location>
        <begin position="138"/>
        <end position="140"/>
    </location>
</feature>
<feature type="turn" evidence="17">
    <location>
        <begin position="150"/>
        <end position="152"/>
    </location>
</feature>
<feature type="helix" evidence="17">
    <location>
        <begin position="160"/>
        <end position="162"/>
    </location>
</feature>
<feature type="helix" evidence="17">
    <location>
        <begin position="164"/>
        <end position="187"/>
    </location>
</feature>
<feature type="strand" evidence="17">
    <location>
        <begin position="191"/>
        <end position="195"/>
    </location>
</feature>
<feature type="helix" evidence="17">
    <location>
        <begin position="199"/>
        <end position="211"/>
    </location>
</feature>
<feature type="helix" evidence="18">
    <location>
        <begin position="217"/>
        <end position="219"/>
    </location>
</feature>
<feature type="helix" evidence="17">
    <location>
        <begin position="220"/>
        <end position="222"/>
    </location>
</feature>
<reference key="1">
    <citation type="journal article" date="1992" name="Genomics">
        <title>Characterization of human adenylate kinase 3 (AK3) cDNA and mapping of the AK3 pseudogene to an intron of the NF1 gene.</title>
        <authorList>
            <person name="Xu G."/>
            <person name="O'Connell P."/>
            <person name="Stevens J."/>
            <person name="White R."/>
        </authorList>
    </citation>
    <scope>NUCLEOTIDE SEQUENCE [MRNA]</scope>
</reference>
<reference key="2">
    <citation type="submission" date="2004-06" db="EMBL/GenBank/DDBJ databases">
        <title>Cloning of human full open reading frames in Gateway(TM) system entry vector (pDONR201).</title>
        <authorList>
            <person name="Ebert L."/>
            <person name="Schick M."/>
            <person name="Neubert P."/>
            <person name="Schatten R."/>
            <person name="Henze S."/>
            <person name="Korn B."/>
        </authorList>
    </citation>
    <scope>NUCLEOTIDE SEQUENCE [LARGE SCALE MRNA]</scope>
</reference>
<reference key="3">
    <citation type="journal article" date="2004" name="Nat. Genet.">
        <title>Complete sequencing and characterization of 21,243 full-length human cDNAs.</title>
        <authorList>
            <person name="Ota T."/>
            <person name="Suzuki Y."/>
            <person name="Nishikawa T."/>
            <person name="Otsuki T."/>
            <person name="Sugiyama T."/>
            <person name="Irie R."/>
            <person name="Wakamatsu A."/>
            <person name="Hayashi K."/>
            <person name="Sato H."/>
            <person name="Nagai K."/>
            <person name="Kimura K."/>
            <person name="Makita H."/>
            <person name="Sekine M."/>
            <person name="Obayashi M."/>
            <person name="Nishi T."/>
            <person name="Shibahara T."/>
            <person name="Tanaka T."/>
            <person name="Ishii S."/>
            <person name="Yamamoto J."/>
            <person name="Saito K."/>
            <person name="Kawai Y."/>
            <person name="Isono Y."/>
            <person name="Nakamura Y."/>
            <person name="Nagahari K."/>
            <person name="Murakami K."/>
            <person name="Yasuda T."/>
            <person name="Iwayanagi T."/>
            <person name="Wagatsuma M."/>
            <person name="Shiratori A."/>
            <person name="Sudo H."/>
            <person name="Hosoiri T."/>
            <person name="Kaku Y."/>
            <person name="Kodaira H."/>
            <person name="Kondo H."/>
            <person name="Sugawara M."/>
            <person name="Takahashi M."/>
            <person name="Kanda K."/>
            <person name="Yokoi T."/>
            <person name="Furuya T."/>
            <person name="Kikkawa E."/>
            <person name="Omura Y."/>
            <person name="Abe K."/>
            <person name="Kamihara K."/>
            <person name="Katsuta N."/>
            <person name="Sato K."/>
            <person name="Tanikawa M."/>
            <person name="Yamazaki M."/>
            <person name="Ninomiya K."/>
            <person name="Ishibashi T."/>
            <person name="Yamashita H."/>
            <person name="Murakawa K."/>
            <person name="Fujimori K."/>
            <person name="Tanai H."/>
            <person name="Kimata M."/>
            <person name="Watanabe M."/>
            <person name="Hiraoka S."/>
            <person name="Chiba Y."/>
            <person name="Ishida S."/>
            <person name="Ono Y."/>
            <person name="Takiguchi S."/>
            <person name="Watanabe S."/>
            <person name="Yosida M."/>
            <person name="Hotuta T."/>
            <person name="Kusano J."/>
            <person name="Kanehori K."/>
            <person name="Takahashi-Fujii A."/>
            <person name="Hara H."/>
            <person name="Tanase T.-O."/>
            <person name="Nomura Y."/>
            <person name="Togiya S."/>
            <person name="Komai F."/>
            <person name="Hara R."/>
            <person name="Takeuchi K."/>
            <person name="Arita M."/>
            <person name="Imose N."/>
            <person name="Musashino K."/>
            <person name="Yuuki H."/>
            <person name="Oshima A."/>
            <person name="Sasaki N."/>
            <person name="Aotsuka S."/>
            <person name="Yoshikawa Y."/>
            <person name="Matsunawa H."/>
            <person name="Ichihara T."/>
            <person name="Shiohata N."/>
            <person name="Sano S."/>
            <person name="Moriya S."/>
            <person name="Momiyama H."/>
            <person name="Satoh N."/>
            <person name="Takami S."/>
            <person name="Terashima Y."/>
            <person name="Suzuki O."/>
            <person name="Nakagawa S."/>
            <person name="Senoh A."/>
            <person name="Mizoguchi H."/>
            <person name="Goto Y."/>
            <person name="Shimizu F."/>
            <person name="Wakebe H."/>
            <person name="Hishigaki H."/>
            <person name="Watanabe T."/>
            <person name="Sugiyama A."/>
            <person name="Takemoto M."/>
            <person name="Kawakami B."/>
            <person name="Yamazaki M."/>
            <person name="Watanabe K."/>
            <person name="Kumagai A."/>
            <person name="Itakura S."/>
            <person name="Fukuzumi Y."/>
            <person name="Fujimori Y."/>
            <person name="Komiyama M."/>
            <person name="Tashiro H."/>
            <person name="Tanigami A."/>
            <person name="Fujiwara T."/>
            <person name="Ono T."/>
            <person name="Yamada K."/>
            <person name="Fujii Y."/>
            <person name="Ozaki K."/>
            <person name="Hirao M."/>
            <person name="Ohmori Y."/>
            <person name="Kawabata A."/>
            <person name="Hikiji T."/>
            <person name="Kobatake N."/>
            <person name="Inagaki H."/>
            <person name="Ikema Y."/>
            <person name="Okamoto S."/>
            <person name="Okitani R."/>
            <person name="Kawakami T."/>
            <person name="Noguchi S."/>
            <person name="Itoh T."/>
            <person name="Shigeta K."/>
            <person name="Senba T."/>
            <person name="Matsumura K."/>
            <person name="Nakajima Y."/>
            <person name="Mizuno T."/>
            <person name="Morinaga M."/>
            <person name="Sasaki M."/>
            <person name="Togashi T."/>
            <person name="Oyama M."/>
            <person name="Hata H."/>
            <person name="Watanabe M."/>
            <person name="Komatsu T."/>
            <person name="Mizushima-Sugano J."/>
            <person name="Satoh T."/>
            <person name="Shirai Y."/>
            <person name="Takahashi Y."/>
            <person name="Nakagawa K."/>
            <person name="Okumura K."/>
            <person name="Nagase T."/>
            <person name="Nomura N."/>
            <person name="Kikuchi H."/>
            <person name="Masuho Y."/>
            <person name="Yamashita R."/>
            <person name="Nakai K."/>
            <person name="Yada T."/>
            <person name="Nakamura Y."/>
            <person name="Ohara O."/>
            <person name="Isogai T."/>
            <person name="Sugano S."/>
        </authorList>
    </citation>
    <scope>NUCLEOTIDE SEQUENCE [LARGE SCALE MRNA]</scope>
    <source>
        <tissue>Testis</tissue>
    </source>
</reference>
<reference key="4">
    <citation type="journal article" date="2006" name="Nature">
        <title>The DNA sequence and biological annotation of human chromosome 1.</title>
        <authorList>
            <person name="Gregory S.G."/>
            <person name="Barlow K.F."/>
            <person name="McLay K.E."/>
            <person name="Kaul R."/>
            <person name="Swarbreck D."/>
            <person name="Dunham A."/>
            <person name="Scott C.E."/>
            <person name="Howe K.L."/>
            <person name="Woodfine K."/>
            <person name="Spencer C.C.A."/>
            <person name="Jones M.C."/>
            <person name="Gillson C."/>
            <person name="Searle S."/>
            <person name="Zhou Y."/>
            <person name="Kokocinski F."/>
            <person name="McDonald L."/>
            <person name="Evans R."/>
            <person name="Phillips K."/>
            <person name="Atkinson A."/>
            <person name="Cooper R."/>
            <person name="Jones C."/>
            <person name="Hall R.E."/>
            <person name="Andrews T.D."/>
            <person name="Lloyd C."/>
            <person name="Ainscough R."/>
            <person name="Almeida J.P."/>
            <person name="Ambrose K.D."/>
            <person name="Anderson F."/>
            <person name="Andrew R.W."/>
            <person name="Ashwell R.I.S."/>
            <person name="Aubin K."/>
            <person name="Babbage A.K."/>
            <person name="Bagguley C.L."/>
            <person name="Bailey J."/>
            <person name="Beasley H."/>
            <person name="Bethel G."/>
            <person name="Bird C.P."/>
            <person name="Bray-Allen S."/>
            <person name="Brown J.Y."/>
            <person name="Brown A.J."/>
            <person name="Buckley D."/>
            <person name="Burton J."/>
            <person name="Bye J."/>
            <person name="Carder C."/>
            <person name="Chapman J.C."/>
            <person name="Clark S.Y."/>
            <person name="Clarke G."/>
            <person name="Clee C."/>
            <person name="Cobley V."/>
            <person name="Collier R.E."/>
            <person name="Corby N."/>
            <person name="Coville G.J."/>
            <person name="Davies J."/>
            <person name="Deadman R."/>
            <person name="Dunn M."/>
            <person name="Earthrowl M."/>
            <person name="Ellington A.G."/>
            <person name="Errington H."/>
            <person name="Frankish A."/>
            <person name="Frankland J."/>
            <person name="French L."/>
            <person name="Garner P."/>
            <person name="Garnett J."/>
            <person name="Gay L."/>
            <person name="Ghori M.R.J."/>
            <person name="Gibson R."/>
            <person name="Gilby L.M."/>
            <person name="Gillett W."/>
            <person name="Glithero R.J."/>
            <person name="Grafham D.V."/>
            <person name="Griffiths C."/>
            <person name="Griffiths-Jones S."/>
            <person name="Grocock R."/>
            <person name="Hammond S."/>
            <person name="Harrison E.S.I."/>
            <person name="Hart E."/>
            <person name="Haugen E."/>
            <person name="Heath P.D."/>
            <person name="Holmes S."/>
            <person name="Holt K."/>
            <person name="Howden P.J."/>
            <person name="Hunt A.R."/>
            <person name="Hunt S.E."/>
            <person name="Hunter G."/>
            <person name="Isherwood J."/>
            <person name="James R."/>
            <person name="Johnson C."/>
            <person name="Johnson D."/>
            <person name="Joy A."/>
            <person name="Kay M."/>
            <person name="Kershaw J.K."/>
            <person name="Kibukawa M."/>
            <person name="Kimberley A.M."/>
            <person name="King A."/>
            <person name="Knights A.J."/>
            <person name="Lad H."/>
            <person name="Laird G."/>
            <person name="Lawlor S."/>
            <person name="Leongamornlert D.A."/>
            <person name="Lloyd D.M."/>
            <person name="Loveland J."/>
            <person name="Lovell J."/>
            <person name="Lush M.J."/>
            <person name="Lyne R."/>
            <person name="Martin S."/>
            <person name="Mashreghi-Mohammadi M."/>
            <person name="Matthews L."/>
            <person name="Matthews N.S.W."/>
            <person name="McLaren S."/>
            <person name="Milne S."/>
            <person name="Mistry S."/>
            <person name="Moore M.J.F."/>
            <person name="Nickerson T."/>
            <person name="O'Dell C.N."/>
            <person name="Oliver K."/>
            <person name="Palmeiri A."/>
            <person name="Palmer S.A."/>
            <person name="Parker A."/>
            <person name="Patel D."/>
            <person name="Pearce A.V."/>
            <person name="Peck A.I."/>
            <person name="Pelan S."/>
            <person name="Phelps K."/>
            <person name="Phillimore B.J."/>
            <person name="Plumb R."/>
            <person name="Rajan J."/>
            <person name="Raymond C."/>
            <person name="Rouse G."/>
            <person name="Saenphimmachak C."/>
            <person name="Sehra H.K."/>
            <person name="Sheridan E."/>
            <person name="Shownkeen R."/>
            <person name="Sims S."/>
            <person name="Skuce C.D."/>
            <person name="Smith M."/>
            <person name="Steward C."/>
            <person name="Subramanian S."/>
            <person name="Sycamore N."/>
            <person name="Tracey A."/>
            <person name="Tromans A."/>
            <person name="Van Helmond Z."/>
            <person name="Wall M."/>
            <person name="Wallis J.M."/>
            <person name="White S."/>
            <person name="Whitehead S.L."/>
            <person name="Wilkinson J.E."/>
            <person name="Willey D.L."/>
            <person name="Williams H."/>
            <person name="Wilming L."/>
            <person name="Wray P.W."/>
            <person name="Wu Z."/>
            <person name="Coulson A."/>
            <person name="Vaudin M."/>
            <person name="Sulston J.E."/>
            <person name="Durbin R.M."/>
            <person name="Hubbard T."/>
            <person name="Wooster R."/>
            <person name="Dunham I."/>
            <person name="Carter N.P."/>
            <person name="McVean G."/>
            <person name="Ross M.T."/>
            <person name="Harrow J."/>
            <person name="Olson M.V."/>
            <person name="Beck S."/>
            <person name="Rogers J."/>
            <person name="Bentley D.R."/>
        </authorList>
    </citation>
    <scope>NUCLEOTIDE SEQUENCE [LARGE SCALE GENOMIC DNA]</scope>
</reference>
<reference key="5">
    <citation type="submission" date="2005-09" db="EMBL/GenBank/DDBJ databases">
        <authorList>
            <person name="Mural R.J."/>
            <person name="Istrail S."/>
            <person name="Sutton G.G."/>
            <person name="Florea L."/>
            <person name="Halpern A.L."/>
            <person name="Mobarry C.M."/>
            <person name="Lippert R."/>
            <person name="Walenz B."/>
            <person name="Shatkay H."/>
            <person name="Dew I."/>
            <person name="Miller J.R."/>
            <person name="Flanigan M.J."/>
            <person name="Edwards N.J."/>
            <person name="Bolanos R."/>
            <person name="Fasulo D."/>
            <person name="Halldorsson B.V."/>
            <person name="Hannenhalli S."/>
            <person name="Turner R."/>
            <person name="Yooseph S."/>
            <person name="Lu F."/>
            <person name="Nusskern D.R."/>
            <person name="Shue B.C."/>
            <person name="Zheng X.H."/>
            <person name="Zhong F."/>
            <person name="Delcher A.L."/>
            <person name="Huson D.H."/>
            <person name="Kravitz S.A."/>
            <person name="Mouchard L."/>
            <person name="Reinert K."/>
            <person name="Remington K.A."/>
            <person name="Clark A.G."/>
            <person name="Waterman M.S."/>
            <person name="Eichler E.E."/>
            <person name="Adams M.D."/>
            <person name="Hunkapiller M.W."/>
            <person name="Myers E.W."/>
            <person name="Venter J.C."/>
        </authorList>
    </citation>
    <scope>NUCLEOTIDE SEQUENCE [LARGE SCALE GENOMIC DNA]</scope>
</reference>
<reference key="6">
    <citation type="journal article" date="2004" name="Genome Res.">
        <title>The status, quality, and expansion of the NIH full-length cDNA project: the Mammalian Gene Collection (MGC).</title>
        <authorList>
            <consortium name="The MGC Project Team"/>
        </authorList>
    </citation>
    <scope>NUCLEOTIDE SEQUENCE [LARGE SCALE MRNA]</scope>
    <source>
        <tissue>Brain</tissue>
        <tissue>Colon</tissue>
        <tissue>Lung</tissue>
    </source>
</reference>
<reference key="7">
    <citation type="journal article" date="2001" name="Biochem. J.">
        <title>Structure and expression of human mitochondrial adenylate kinase targeted to the mitochondrial matrix.</title>
        <authorList>
            <person name="Noma T."/>
            <person name="Fujisawa K."/>
            <person name="Yamashiro Y."/>
            <person name="Shinohara M."/>
            <person name="Nakazawa A."/>
            <person name="Gondo T."/>
            <person name="Ishihara T."/>
            <person name="Yoshinobu K."/>
        </authorList>
    </citation>
    <scope>TISSUE SPECIFICITY</scope>
    <scope>SUBCELLULAR LOCATION</scope>
</reference>
<reference key="8">
    <citation type="journal article" date="2009" name="Int. J. Biochem. Cell Biol.">
        <title>Enzymatically inactive adenylate kinase 4 interacts with mitochondrial ADP/ATP translocase.</title>
        <authorList>
            <person name="Liu R."/>
            <person name="Stroem A.L."/>
            <person name="Zhai J."/>
            <person name="Gal J."/>
            <person name="Bao S."/>
            <person name="Gong W."/>
            <person name="Zhu H."/>
        </authorList>
    </citation>
    <scope>FUNCTION</scope>
    <scope>INTERACTION WITH SLC25A5</scope>
    <scope>INDUCTION BY HYPOXIA</scope>
</reference>
<reference key="9">
    <citation type="journal article" date="2010" name="Int. J. Biochem. Cell Biol.">
        <title>Evidence of an intact N-terminal translocation sequence of human mitochondrial adenylate kinase 4.</title>
        <authorList>
            <person name="Panayiotou C."/>
            <person name="Solaroli N."/>
            <person name="Johansson M."/>
            <person name="Karlsson A."/>
        </authorList>
    </citation>
    <scope>FUNCTION</scope>
    <scope>CATALYTIC ACTIVITY</scope>
    <scope>SUBCELLULAR LOCATION</scope>
    <scope>BIOPHYSICOCHEMICAL PROPERTIES</scope>
    <scope>MUTAGENESIS OF LYS-4 AND ARG-7</scope>
</reference>
<reference key="10">
    <citation type="journal article" date="2011" name="BMC Syst. Biol.">
        <title>Initial characterization of the human central proteome.</title>
        <authorList>
            <person name="Burkard T.R."/>
            <person name="Planyavsky M."/>
            <person name="Kaupe I."/>
            <person name="Breitwieser F.P."/>
            <person name="Buerckstuemmer T."/>
            <person name="Bennett K.L."/>
            <person name="Superti-Furga G."/>
            <person name="Colinge J."/>
        </authorList>
    </citation>
    <scope>IDENTIFICATION BY MASS SPECTROMETRY [LARGE SCALE ANALYSIS]</scope>
</reference>
<reference key="11">
    <citation type="journal article" date="2013" name="Arch. Biochem. Biophys.">
        <title>Differential expression of adenylate kinase 4 in the context of disparate stress response strategies of HEK293 and HepG2 cells.</title>
        <authorList>
            <person name="Kong F."/>
            <person name="Binas B."/>
            <person name="Moon J.H."/>
            <person name="Kang S.S."/>
            <person name="Kim H.J."/>
        </authorList>
    </citation>
    <scope>FUNCTION</scope>
    <scope>INDUCTION</scope>
</reference>
<reference key="12">
    <citation type="journal article" date="2013" name="Int. J. Biochem. Cell Biol.">
        <title>The human adenylate kinase 9 is a nucleoside mono- and diphosphate kinase.</title>
        <authorList>
            <person name="Amiri M."/>
            <person name="Conserva F."/>
            <person name="Panayiotou C."/>
            <person name="Karlsson A."/>
            <person name="Solaroli N."/>
        </authorList>
    </citation>
    <scope>FUNCTION</scope>
    <scope>CATALYTIC ACTIVITY</scope>
</reference>
<reference key="13">
    <citation type="journal article" date="2014" name="Cell Rep.">
        <title>A mitochondrial RNAi screen defines cellular bioenergetic determinants and identifies an adenylate kinase as a key regulator of ATP levels.</title>
        <authorList>
            <person name="Lanning N.J."/>
            <person name="Looyenga B.D."/>
            <person name="Kauffman A.L."/>
            <person name="Niemi N.M."/>
            <person name="Sudderth J."/>
            <person name="DeBerardinis R.J."/>
            <person name="MacKeigan J.P."/>
        </authorList>
    </citation>
    <scope>FUNCTION</scope>
</reference>
<reference key="14">
    <citation type="journal article" date="2014" name="J. Proteomics">
        <title>An enzyme assisted RP-RPLC approach for in-depth analysis of human liver phosphoproteome.</title>
        <authorList>
            <person name="Bian Y."/>
            <person name="Song C."/>
            <person name="Cheng K."/>
            <person name="Dong M."/>
            <person name="Wang F."/>
            <person name="Huang J."/>
            <person name="Sun D."/>
            <person name="Wang L."/>
            <person name="Ye M."/>
            <person name="Zou H."/>
        </authorList>
    </citation>
    <scope>IDENTIFICATION BY MASS SPECTROMETRY [LARGE SCALE ANALYSIS]</scope>
    <source>
        <tissue>Liver</tissue>
    </source>
</reference>
<reference key="15">
    <citation type="journal article" date="2015" name="Proteomics">
        <title>N-terminome analysis of the human mitochondrial proteome.</title>
        <authorList>
            <person name="Vaca Jacome A.S."/>
            <person name="Rabilloud T."/>
            <person name="Schaeffer-Reiss C."/>
            <person name="Rompais M."/>
            <person name="Ayoub D."/>
            <person name="Lane L."/>
            <person name="Bairoch A."/>
            <person name="Van Dorsselaer A."/>
            <person name="Carapito C."/>
        </authorList>
    </citation>
    <scope>IDENTIFICATION BY MASS SPECTROMETRY [LARGE SCALE ANALYSIS]</scope>
</reference>
<reference key="16">
    <citation type="journal article" date="2016" name="J. Exp. Clin. Cancer Res.">
        <title>Modulation of anti-cancer drug sensitivity through the regulation of mitochondrial activity by adenylate kinase 4.</title>
        <authorList>
            <person name="Fujisawa K."/>
            <person name="Terai S."/>
            <person name="Takami T."/>
            <person name="Yamamoto N."/>
            <person name="Yamasaki T."/>
            <person name="Matsumoto T."/>
            <person name="Yamaguchi K."/>
            <person name="Owada Y."/>
            <person name="Nishina H."/>
            <person name="Noma T."/>
            <person name="Sakaida I."/>
        </authorList>
    </citation>
    <scope>FUNCTION</scope>
    <scope>SUBCELLULAR LOCATION</scope>
    <scope>INDUCTION</scope>
</reference>
<reference key="17">
    <citation type="submission" date="2005-12" db="PDB data bank">
        <title>Crystal structure of human adenylate kinase 4 (AK4) in complex with diguanosine pentaphosphate.</title>
        <authorList>
            <consortium name="Structural genomics consortium (SGC)"/>
        </authorList>
    </citation>
    <scope>X-RAY CRYSTALLOGRAPHY (2.05 ANGSTROMS) IN COMPLEX WITH DIGUANOSINE PENTAPHOSPHATE</scope>
    <scope>SUBUNIT</scope>
</reference>
<reference key="18">
    <citation type="journal article" date="2009" name="Biochem. Biophys. Res. Commun.">
        <title>Crystal structure of human adenylate kinase 4 (L171P) suggests the role of hinge region in protein domain motion.</title>
        <authorList>
            <person name="Liu R."/>
            <person name="Xu H."/>
            <person name="Wei Z."/>
            <person name="Wang Y."/>
            <person name="Lin Y."/>
            <person name="Gong W."/>
        </authorList>
    </citation>
    <scope>X-RAY CRYSTALLOGRAPHY (2.3 ANGSTROMS)</scope>
    <scope>FUNCTION</scope>
</reference>
<dbReference type="EC" id="2.7.4.4" evidence="6 7"/>
<dbReference type="EC" id="2.7.4.6" evidence="6 7"/>
<dbReference type="EMBL" id="X60673">
    <property type="protein sequence ID" value="CAA43088.1"/>
    <property type="molecule type" value="mRNA"/>
</dbReference>
<dbReference type="EMBL" id="CR456830">
    <property type="protein sequence ID" value="CAG33111.1"/>
    <property type="molecule type" value="mRNA"/>
</dbReference>
<dbReference type="EMBL" id="AK313611">
    <property type="protein sequence ID" value="BAG36374.1"/>
    <property type="molecule type" value="mRNA"/>
</dbReference>
<dbReference type="EMBL" id="AC099680">
    <property type="status" value="NOT_ANNOTATED_CDS"/>
    <property type="molecule type" value="Genomic_DNA"/>
</dbReference>
<dbReference type="EMBL" id="AL356212">
    <property type="status" value="NOT_ANNOTATED_CDS"/>
    <property type="molecule type" value="Genomic_DNA"/>
</dbReference>
<dbReference type="EMBL" id="CH471059">
    <property type="protein sequence ID" value="EAX06538.1"/>
    <property type="molecule type" value="Genomic_DNA"/>
</dbReference>
<dbReference type="EMBL" id="CH471059">
    <property type="protein sequence ID" value="EAX06540.1"/>
    <property type="molecule type" value="Genomic_DNA"/>
</dbReference>
<dbReference type="EMBL" id="CH471059">
    <property type="protein sequence ID" value="EAX06544.1"/>
    <property type="molecule type" value="Genomic_DNA"/>
</dbReference>
<dbReference type="EMBL" id="BC016180">
    <property type="protein sequence ID" value="AAH16180.1"/>
    <property type="molecule type" value="mRNA"/>
</dbReference>
<dbReference type="EMBL" id="BC040224">
    <property type="protein sequence ID" value="AAH40224.1"/>
    <property type="molecule type" value="mRNA"/>
</dbReference>
<dbReference type="EMBL" id="BC066944">
    <property type="protein sequence ID" value="AAH66944.1"/>
    <property type="molecule type" value="mRNA"/>
</dbReference>
<dbReference type="EMBL" id="BC136886">
    <property type="protein sequence ID" value="AAI36887.1"/>
    <property type="molecule type" value="mRNA"/>
</dbReference>
<dbReference type="EMBL" id="BC136887">
    <property type="protein sequence ID" value="AAI36888.1"/>
    <property type="molecule type" value="mRNA"/>
</dbReference>
<dbReference type="EMBL" id="BC148270">
    <property type="protein sequence ID" value="AAI48271.1"/>
    <property type="molecule type" value="mRNA"/>
</dbReference>
<dbReference type="EMBL" id="BC146653">
    <property type="protein sequence ID" value="AAI46654.1"/>
    <property type="molecule type" value="mRNA"/>
</dbReference>
<dbReference type="CCDS" id="CCDS629.1"/>
<dbReference type="PIR" id="A42820">
    <property type="entry name" value="KIHUA3"/>
</dbReference>
<dbReference type="RefSeq" id="NP_001005353.1">
    <property type="nucleotide sequence ID" value="NM_001005353.3"/>
</dbReference>
<dbReference type="RefSeq" id="NP_037542.1">
    <property type="nucleotide sequence ID" value="NM_013410.4"/>
</dbReference>
<dbReference type="RefSeq" id="NP_982289.1">
    <property type="nucleotide sequence ID" value="NM_203464.3"/>
</dbReference>
<dbReference type="PDB" id="2AR7">
    <property type="method" value="X-ray"/>
    <property type="resolution" value="2.15 A"/>
    <property type="chains" value="A/B=1-223"/>
</dbReference>
<dbReference type="PDB" id="2BBW">
    <property type="method" value="X-ray"/>
    <property type="resolution" value="2.05 A"/>
    <property type="chains" value="A/B=1-223"/>
</dbReference>
<dbReference type="PDB" id="3NDP">
    <property type="method" value="X-ray"/>
    <property type="resolution" value="2.30 A"/>
    <property type="chains" value="A/B=1-223"/>
</dbReference>
<dbReference type="PDBsum" id="2AR7"/>
<dbReference type="PDBsum" id="2BBW"/>
<dbReference type="PDBsum" id="3NDP"/>
<dbReference type="SMR" id="P27144"/>
<dbReference type="BioGRID" id="106708">
    <property type="interactions" value="193"/>
</dbReference>
<dbReference type="BioGRID" id="1529152">
    <property type="interactions" value="1"/>
</dbReference>
<dbReference type="FunCoup" id="P27144">
    <property type="interactions" value="1638"/>
</dbReference>
<dbReference type="IntAct" id="P27144">
    <property type="interactions" value="99"/>
</dbReference>
<dbReference type="MINT" id="P27144"/>
<dbReference type="STRING" id="9606.ENSP00000378743"/>
<dbReference type="BindingDB" id="P27144"/>
<dbReference type="ChEMBL" id="CHEMBL4926"/>
<dbReference type="DrugBank" id="DB00718">
    <property type="generic name" value="Adefovir dipivoxil"/>
</dbReference>
<dbReference type="DrugBank" id="DB00300">
    <property type="generic name" value="Tenofovir disoproxil"/>
</dbReference>
<dbReference type="iPTMnet" id="P27144"/>
<dbReference type="PhosphoSitePlus" id="P27144"/>
<dbReference type="SwissPalm" id="P27144"/>
<dbReference type="BioMuta" id="AK4"/>
<dbReference type="DMDM" id="125157"/>
<dbReference type="jPOST" id="P27144"/>
<dbReference type="MassIVE" id="P27144"/>
<dbReference type="PaxDb" id="9606-ENSP00000378743"/>
<dbReference type="PeptideAtlas" id="P27144"/>
<dbReference type="ProteomicsDB" id="54375"/>
<dbReference type="Pumba" id="P27144"/>
<dbReference type="TopDownProteomics" id="P27144"/>
<dbReference type="ABCD" id="P27144">
    <property type="antibodies" value="10 sequenced antibodies"/>
</dbReference>
<dbReference type="Antibodypedia" id="19540">
    <property type="antibodies" value="476 antibodies from 32 providers"/>
</dbReference>
<dbReference type="DNASU" id="205"/>
<dbReference type="Ensembl" id="ENST00000327299.8">
    <property type="protein sequence ID" value="ENSP00000322175.7"/>
    <property type="gene ID" value="ENSG00000162433.15"/>
</dbReference>
<dbReference type="Ensembl" id="ENST00000395334.6">
    <property type="protein sequence ID" value="ENSP00000378743.2"/>
    <property type="gene ID" value="ENSG00000162433.15"/>
</dbReference>
<dbReference type="Ensembl" id="ENST00000545314.5">
    <property type="protein sequence ID" value="ENSP00000445912.1"/>
    <property type="gene ID" value="ENSG00000162433.15"/>
</dbReference>
<dbReference type="GeneID" id="205"/>
<dbReference type="KEGG" id="hsa:205"/>
<dbReference type="MANE-Select" id="ENST00000327299.8">
    <property type="protein sequence ID" value="ENSP00000322175.7"/>
    <property type="RefSeq nucleotide sequence ID" value="NM_013410.4"/>
    <property type="RefSeq protein sequence ID" value="NP_037542.1"/>
</dbReference>
<dbReference type="UCSC" id="uc001dby.3">
    <property type="organism name" value="human"/>
</dbReference>
<dbReference type="AGR" id="HGNC:363"/>
<dbReference type="CTD" id="205"/>
<dbReference type="DisGeNET" id="205"/>
<dbReference type="GeneCards" id="AK4"/>
<dbReference type="HGNC" id="HGNC:363">
    <property type="gene designation" value="AK4"/>
</dbReference>
<dbReference type="HPA" id="ENSG00000162433">
    <property type="expression patterns" value="Tissue enhanced (kidney, liver)"/>
</dbReference>
<dbReference type="MIM" id="103030">
    <property type="type" value="gene"/>
</dbReference>
<dbReference type="neXtProt" id="NX_P27144"/>
<dbReference type="OpenTargets" id="ENSG00000162433"/>
<dbReference type="PharmGKB" id="PA165750325"/>
<dbReference type="VEuPathDB" id="HostDB:ENSG00000162433"/>
<dbReference type="eggNOG" id="KOG3078">
    <property type="taxonomic scope" value="Eukaryota"/>
</dbReference>
<dbReference type="GeneTree" id="ENSGT00940000154568"/>
<dbReference type="HOGENOM" id="CLU_032354_1_1_1"/>
<dbReference type="InParanoid" id="P27144"/>
<dbReference type="OMA" id="IKVENTM"/>
<dbReference type="OrthoDB" id="439792at2759"/>
<dbReference type="PAN-GO" id="P27144">
    <property type="GO annotations" value="6 GO annotations based on evolutionary models"/>
</dbReference>
<dbReference type="PhylomeDB" id="P27144"/>
<dbReference type="TreeFam" id="TF312916"/>
<dbReference type="BRENDA" id="2.7.4.10">
    <property type="organism ID" value="2681"/>
</dbReference>
<dbReference type="BRENDA" id="2.7.4.3">
    <property type="organism ID" value="2681"/>
</dbReference>
<dbReference type="PathwayCommons" id="P27144"/>
<dbReference type="Reactome" id="R-HSA-499943">
    <property type="pathway name" value="Interconversion of nucleotide di- and triphosphates"/>
</dbReference>
<dbReference type="SABIO-RK" id="P27144"/>
<dbReference type="SignaLink" id="P27144"/>
<dbReference type="BioGRID-ORCS" id="205">
    <property type="hits" value="136 hits in 1122 CRISPR screens"/>
</dbReference>
<dbReference type="CD-CODE" id="91857CE7">
    <property type="entry name" value="Nucleolus"/>
</dbReference>
<dbReference type="ChiTaRS" id="AK4">
    <property type="organism name" value="human"/>
</dbReference>
<dbReference type="EvolutionaryTrace" id="P27144"/>
<dbReference type="GeneWiki" id="AK3L1"/>
<dbReference type="GenomeRNAi" id="205"/>
<dbReference type="Pharos" id="P27144">
    <property type="development level" value="Tbio"/>
</dbReference>
<dbReference type="PRO" id="PR:P27144"/>
<dbReference type="Proteomes" id="UP000005640">
    <property type="component" value="Chromosome 1"/>
</dbReference>
<dbReference type="RNAct" id="P27144">
    <property type="molecule type" value="protein"/>
</dbReference>
<dbReference type="Bgee" id="ENSG00000162433">
    <property type="expression patterns" value="Expressed in adult organism and 201 other cell types or tissues"/>
</dbReference>
<dbReference type="ExpressionAtlas" id="P27144">
    <property type="expression patterns" value="baseline and differential"/>
</dbReference>
<dbReference type="GO" id="GO:0005737">
    <property type="term" value="C:cytoplasm"/>
    <property type="evidence" value="ECO:0000318"/>
    <property type="project" value="GO_Central"/>
</dbReference>
<dbReference type="GO" id="GO:0005759">
    <property type="term" value="C:mitochondrial matrix"/>
    <property type="evidence" value="ECO:0000250"/>
    <property type="project" value="BHF-UCL"/>
</dbReference>
<dbReference type="GO" id="GO:0005739">
    <property type="term" value="C:mitochondrion"/>
    <property type="evidence" value="ECO:0000314"/>
    <property type="project" value="UniProtKB"/>
</dbReference>
<dbReference type="GO" id="GO:0004017">
    <property type="term" value="F:adenylate kinase activity"/>
    <property type="evidence" value="ECO:0000314"/>
    <property type="project" value="BHF-UCL"/>
</dbReference>
<dbReference type="GO" id="GO:0005524">
    <property type="term" value="F:ATP binding"/>
    <property type="evidence" value="ECO:0007669"/>
    <property type="project" value="UniProtKB-KW"/>
</dbReference>
<dbReference type="GO" id="GO:0036430">
    <property type="term" value="F:CMP kinase activity"/>
    <property type="evidence" value="ECO:0007669"/>
    <property type="project" value="RHEA"/>
</dbReference>
<dbReference type="GO" id="GO:0036431">
    <property type="term" value="F:dCMP kinase activity"/>
    <property type="evidence" value="ECO:0007669"/>
    <property type="project" value="RHEA"/>
</dbReference>
<dbReference type="GO" id="GO:0047506">
    <property type="term" value="F:deoxyadenylate kinase activity"/>
    <property type="evidence" value="ECO:0007669"/>
    <property type="project" value="RHEA"/>
</dbReference>
<dbReference type="GO" id="GO:0005525">
    <property type="term" value="F:GTP binding"/>
    <property type="evidence" value="ECO:0007669"/>
    <property type="project" value="UniProtKB-KW"/>
</dbReference>
<dbReference type="GO" id="GO:0004550">
    <property type="term" value="F:nucleoside diphosphate kinase activity"/>
    <property type="evidence" value="ECO:0000314"/>
    <property type="project" value="UniProtKB"/>
</dbReference>
<dbReference type="GO" id="GO:0050145">
    <property type="term" value="F:nucleoside monophosphate kinase activity"/>
    <property type="evidence" value="ECO:0000304"/>
    <property type="project" value="Reactome"/>
</dbReference>
<dbReference type="GO" id="GO:0046899">
    <property type="term" value="F:nucleoside triphosphate adenylate kinase activity"/>
    <property type="evidence" value="ECO:0000314"/>
    <property type="project" value="BHF-UCL"/>
</dbReference>
<dbReference type="GO" id="GO:0006172">
    <property type="term" value="P:ADP biosynthetic process"/>
    <property type="evidence" value="ECO:0007669"/>
    <property type="project" value="UniProtKB-UniRule"/>
</dbReference>
<dbReference type="GO" id="GO:0046033">
    <property type="term" value="P:AMP metabolic process"/>
    <property type="evidence" value="ECO:0000314"/>
    <property type="project" value="BHF-UCL"/>
</dbReference>
<dbReference type="GO" id="GO:0046034">
    <property type="term" value="P:ATP metabolic process"/>
    <property type="evidence" value="ECO:0000314"/>
    <property type="project" value="BHF-UCL"/>
</dbReference>
<dbReference type="GO" id="GO:0071456">
    <property type="term" value="P:cellular response to hypoxia"/>
    <property type="evidence" value="ECO:0000315"/>
    <property type="project" value="UniProtKB"/>
</dbReference>
<dbReference type="GO" id="GO:0046039">
    <property type="term" value="P:GTP metabolic process"/>
    <property type="evidence" value="ECO:0000314"/>
    <property type="project" value="BHF-UCL"/>
</dbReference>
<dbReference type="GO" id="GO:0015949">
    <property type="term" value="P:nucleobase-containing small molecule interconversion"/>
    <property type="evidence" value="ECO:0000304"/>
    <property type="project" value="Reactome"/>
</dbReference>
<dbReference type="GO" id="GO:0009142">
    <property type="term" value="P:nucleoside triphosphate biosynthetic process"/>
    <property type="evidence" value="ECO:0000318"/>
    <property type="project" value="GO_Central"/>
</dbReference>
<dbReference type="GO" id="GO:0002082">
    <property type="term" value="P:regulation of oxidative phosphorylation"/>
    <property type="evidence" value="ECO:0000315"/>
    <property type="project" value="UniProtKB"/>
</dbReference>
<dbReference type="GO" id="GO:0009188">
    <property type="term" value="P:ribonucleoside diphosphate biosynthetic process"/>
    <property type="evidence" value="ECO:0000315"/>
    <property type="project" value="UniProtKB"/>
</dbReference>
<dbReference type="CDD" id="cd01428">
    <property type="entry name" value="ADK"/>
    <property type="match status" value="1"/>
</dbReference>
<dbReference type="FunFam" id="3.40.50.300:FF:000106">
    <property type="entry name" value="Adenylate kinase mitochondrial"/>
    <property type="match status" value="1"/>
</dbReference>
<dbReference type="Gene3D" id="3.40.50.300">
    <property type="entry name" value="P-loop containing nucleotide triphosphate hydrolases"/>
    <property type="match status" value="1"/>
</dbReference>
<dbReference type="HAMAP" id="MF_00235">
    <property type="entry name" value="Adenylate_kinase_Adk"/>
    <property type="match status" value="1"/>
</dbReference>
<dbReference type="HAMAP" id="MF_03169">
    <property type="entry name" value="Adenylate_kinase_AK3"/>
    <property type="match status" value="1"/>
</dbReference>
<dbReference type="HAMAP" id="MF_03170">
    <property type="entry name" value="Adenylate_kinase_AK4"/>
    <property type="match status" value="1"/>
</dbReference>
<dbReference type="InterPro" id="IPR006259">
    <property type="entry name" value="Adenyl_kin_sub"/>
</dbReference>
<dbReference type="InterPro" id="IPR000850">
    <property type="entry name" value="Adenylat/UMP-CMP_kin"/>
</dbReference>
<dbReference type="InterPro" id="IPR033690">
    <property type="entry name" value="Adenylat_kinase_CS"/>
</dbReference>
<dbReference type="InterPro" id="IPR007862">
    <property type="entry name" value="Adenylate_kinase_lid-dom"/>
</dbReference>
<dbReference type="InterPro" id="IPR036193">
    <property type="entry name" value="ADK_active_lid_dom_sf"/>
</dbReference>
<dbReference type="InterPro" id="IPR028586">
    <property type="entry name" value="AK3/Ak4_mitochondrial"/>
</dbReference>
<dbReference type="InterPro" id="IPR028585">
    <property type="entry name" value="AK4_mitochondrial"/>
</dbReference>
<dbReference type="InterPro" id="IPR027417">
    <property type="entry name" value="P-loop_NTPase"/>
</dbReference>
<dbReference type="NCBIfam" id="TIGR01351">
    <property type="entry name" value="adk"/>
    <property type="match status" value="1"/>
</dbReference>
<dbReference type="PANTHER" id="PTHR23359">
    <property type="entry name" value="NUCLEOTIDE KINASE"/>
    <property type="match status" value="1"/>
</dbReference>
<dbReference type="Pfam" id="PF00406">
    <property type="entry name" value="ADK"/>
    <property type="match status" value="1"/>
</dbReference>
<dbReference type="Pfam" id="PF05191">
    <property type="entry name" value="ADK_lid"/>
    <property type="match status" value="1"/>
</dbReference>
<dbReference type="PRINTS" id="PR00094">
    <property type="entry name" value="ADENYLTKNASE"/>
</dbReference>
<dbReference type="SUPFAM" id="SSF57774">
    <property type="entry name" value="Microbial and mitochondrial ADK, insert 'zinc finger' domain"/>
    <property type="match status" value="1"/>
</dbReference>
<dbReference type="SUPFAM" id="SSF52540">
    <property type="entry name" value="P-loop containing nucleoside triphosphate hydrolases"/>
    <property type="match status" value="1"/>
</dbReference>
<dbReference type="PROSITE" id="PS00113">
    <property type="entry name" value="ADENYLATE_KINASE"/>
    <property type="match status" value="1"/>
</dbReference>
<protein>
    <recommendedName>
        <fullName evidence="14">Adenylate kinase 4, mitochondrial</fullName>
        <ecNumber evidence="6 7">2.7.4.4</ecNumber>
        <ecNumber evidence="6 7">2.7.4.6</ecNumber>
    </recommendedName>
    <alternativeName>
        <fullName evidence="2">Adenylate kinase 3-like</fullName>
    </alternativeName>
    <alternativeName>
        <fullName evidence="2">GTP:AMP phosphotransferase AK4</fullName>
    </alternativeName>
</protein>
<organism>
    <name type="scientific">Homo sapiens</name>
    <name type="common">Human</name>
    <dbReference type="NCBI Taxonomy" id="9606"/>
    <lineage>
        <taxon>Eukaryota</taxon>
        <taxon>Metazoa</taxon>
        <taxon>Chordata</taxon>
        <taxon>Craniata</taxon>
        <taxon>Vertebrata</taxon>
        <taxon>Euteleostomi</taxon>
        <taxon>Mammalia</taxon>
        <taxon>Eutheria</taxon>
        <taxon>Euarchontoglires</taxon>
        <taxon>Primates</taxon>
        <taxon>Haplorrhini</taxon>
        <taxon>Catarrhini</taxon>
        <taxon>Hominidae</taxon>
        <taxon>Homo</taxon>
    </lineage>
</organism>
<sequence>MASKLLRAVILGPPGSGKGTVCQRIAQNFGLQHLSSGHFLRENIKASTEVGEMAKQYIEKSLLVPDHVITRLMMSELENRRGQHWLLDGFPRTLGQAEALDKICEVDLVISLNIPFETLKDRLSRRWIHPPSGRVYNLDFNPPHVHGIDDVTGEPLVQQEDDKPEAVAARLRQYKDVAKPVIELYKSRGVLHQFSGTETNKIWPYVYTLFSNKITPIQSKEAY</sequence>